<dbReference type="SMR" id="P0DQP7"/>
<dbReference type="GO" id="GO:0005576">
    <property type="term" value="C:extracellular region"/>
    <property type="evidence" value="ECO:0007669"/>
    <property type="project" value="UniProtKB-SubCell"/>
</dbReference>
<dbReference type="GO" id="GO:0019834">
    <property type="term" value="F:phospholipase A2 inhibitor activity"/>
    <property type="evidence" value="ECO:0007669"/>
    <property type="project" value="UniProtKB-KW"/>
</dbReference>
<dbReference type="CDD" id="cd23629">
    <property type="entry name" value="TFP_LU_ECD_PLIGA"/>
    <property type="match status" value="1"/>
</dbReference>
<dbReference type="Gene3D" id="2.10.60.10">
    <property type="entry name" value="CD59"/>
    <property type="match status" value="1"/>
</dbReference>
<dbReference type="InterPro" id="IPR050918">
    <property type="entry name" value="CNF-like_PLA2_Inhibitor"/>
</dbReference>
<dbReference type="InterPro" id="IPR016054">
    <property type="entry name" value="LY6_UPA_recep-like"/>
</dbReference>
<dbReference type="InterPro" id="IPR016338">
    <property type="entry name" value="PLipase_A2-inh_b-type"/>
</dbReference>
<dbReference type="InterPro" id="IPR004126">
    <property type="entry name" value="PLipase_A2_inh_N"/>
</dbReference>
<dbReference type="InterPro" id="IPR045860">
    <property type="entry name" value="Snake_toxin-like_sf"/>
</dbReference>
<dbReference type="PANTHER" id="PTHR20914">
    <property type="entry name" value="LY6/PLAUR DOMAIN-CONTAINING PROTEIN 8"/>
    <property type="match status" value="1"/>
</dbReference>
<dbReference type="PANTHER" id="PTHR20914:SF30">
    <property type="entry name" value="LY6_PLAUR DOMAIN CONTAINING 9"/>
    <property type="match status" value="1"/>
</dbReference>
<dbReference type="Pfam" id="PF02988">
    <property type="entry name" value="PLA2_inh"/>
    <property type="match status" value="1"/>
</dbReference>
<dbReference type="Pfam" id="PF00021">
    <property type="entry name" value="UPAR_LY6"/>
    <property type="match status" value="1"/>
</dbReference>
<dbReference type="PIRSF" id="PIRSF002023">
    <property type="entry name" value="PLA2_inhib_alpha/gamma"/>
    <property type="match status" value="1"/>
</dbReference>
<dbReference type="SMART" id="SM00134">
    <property type="entry name" value="LU"/>
    <property type="match status" value="1"/>
</dbReference>
<dbReference type="SUPFAM" id="SSF57302">
    <property type="entry name" value="Snake toxin-like"/>
    <property type="match status" value="1"/>
</dbReference>
<comment type="function">
    <text evidence="3">Inhibits the enzymatic activity of basic phospholipase A2 (PubMed:10698689). Specifically neutralizes PLA2, myotoxic, edema-forming, cytolytic, and anti-coagulant activities, as well as intracerebral lethal effect of the basic myotoxin I from the same venom (AC P0DQP6), crotoxin heterodimer and crotoxin subunit B alone (PubMed:10698689). Does not block the enzymatic activity of crude acidic PLA2 fractions from the same venom (PubMed:10698689).</text>
</comment>
<comment type="subunit">
    <text evidence="3">Homomer of 110 kDa composed of 20-25-kDa subunits.</text>
</comment>
<comment type="subcellular location">
    <subcellularLocation>
        <location evidence="3">Secreted</location>
    </subcellularLocation>
    <text evidence="3">Secreted in blood plasma.</text>
</comment>
<comment type="tissue specificity">
    <text evidence="6">Expressed by the liver.</text>
</comment>
<comment type="PTM">
    <text evidence="3">N-glycosylated. The glycosidic chain may contain superficial sialic acid residues.</text>
</comment>
<comment type="similarity">
    <text evidence="5">Belongs to the CNF-like-inhibitor family.</text>
</comment>
<protein>
    <recommendedName>
        <fullName evidence="5">Phospholipase A2 inhibitor CgMIP-I</fullName>
    </recommendedName>
    <alternativeName>
        <fullName evidence="4">Myotoxin inhibitor protein I of C.godmani</fullName>
        <shortName evidence="4">CgMIP-I</shortName>
    </alternativeName>
    <alternativeName>
        <fullName>gamma-PLI</fullName>
    </alternativeName>
</protein>
<name>PLIG1_CERGO</name>
<keyword id="KW-0903">Direct protein sequencing</keyword>
<keyword id="KW-1015">Disulfide bond</keyword>
<keyword id="KW-0325">Glycoprotein</keyword>
<keyword id="KW-0593">Phospholipase A2 inhibitor</keyword>
<keyword id="KW-0964">Secreted</keyword>
<keyword id="KW-0732">Signal</keyword>
<organism>
    <name type="scientific">Cerrophidion godmani</name>
    <name type="common">Porthidium godmani</name>
    <name type="synonym">Bothrops godmani</name>
    <dbReference type="NCBI Taxonomy" id="44722"/>
    <lineage>
        <taxon>Eukaryota</taxon>
        <taxon>Metazoa</taxon>
        <taxon>Chordata</taxon>
        <taxon>Craniata</taxon>
        <taxon>Vertebrata</taxon>
        <taxon>Euteleostomi</taxon>
        <taxon>Lepidosauria</taxon>
        <taxon>Squamata</taxon>
        <taxon>Bifurcata</taxon>
        <taxon>Unidentata</taxon>
        <taxon>Episquamata</taxon>
        <taxon>Toxicofera</taxon>
        <taxon>Serpentes</taxon>
        <taxon>Colubroidea</taxon>
        <taxon>Viperidae</taxon>
        <taxon>Crotalinae</taxon>
        <taxon>Cerrophidion</taxon>
    </lineage>
</organism>
<proteinExistence type="evidence at protein level"/>
<feature type="signal peptide" evidence="3">
    <location>
        <begin position="1"/>
        <end position="19"/>
    </location>
</feature>
<feature type="chain" id="PRO_0000452705" description="Phospholipase A2 inhibitor CgMIP-I" evidence="6">
    <location>
        <begin position="20"/>
        <end position="200"/>
    </location>
</feature>
<feature type="glycosylation site" description="N-linked (GlcNAc...) asparagine" evidence="2">
    <location>
        <position position="176"/>
    </location>
</feature>
<feature type="disulfide bond" evidence="1">
    <location>
        <begin position="22"/>
        <end position="46"/>
    </location>
</feature>
<feature type="disulfide bond" evidence="1">
    <location>
        <begin position="25"/>
        <end position="32"/>
    </location>
</feature>
<feature type="disulfide bond" evidence="1">
    <location>
        <begin position="39"/>
        <end position="67"/>
    </location>
</feature>
<feature type="disulfide bond" evidence="1">
    <location>
        <begin position="73"/>
        <end position="94"/>
    </location>
</feature>
<feature type="disulfide bond" evidence="1">
    <location>
        <begin position="95"/>
        <end position="100"/>
    </location>
</feature>
<feature type="disulfide bond" evidence="1">
    <location>
        <begin position="118"/>
        <end position="143"/>
    </location>
</feature>
<feature type="disulfide bond" evidence="1">
    <location>
        <begin position="136"/>
        <end position="165"/>
    </location>
</feature>
<feature type="sequence conflict" description="In Ref. 1; AA sequence." evidence="5" ref="1">
    <original>Y</original>
    <variation>V</variation>
    <location>
        <position position="35"/>
    </location>
</feature>
<feature type="sequence conflict" description="In Ref. 1; AA sequence." evidence="5" ref="1">
    <original>S</original>
    <variation>D</variation>
    <location>
        <position position="41"/>
    </location>
</feature>
<sequence length="200" mass="22407">MKYLHTICLLFIFVARGNSRSCDFCHNIGKECDGYEKECSSPEDVCGKVLLEISSASLSVRTVHKNCFSSSVCKLEQFDVNIGHHSYIRGRINCCEKEQCEDRPFPGLPLSQPNGYYCPGALGLFTEDSTEFEAICKGTETKCINIVGHRHEDFPGDISYNLKGCISSCPLLSLSNATHEENRNYLEKVECKDAFQLARL</sequence>
<evidence type="ECO:0000250" key="1">
    <source>
        <dbReference type="UniProtKB" id="Q7LZI2"/>
    </source>
</evidence>
<evidence type="ECO:0000255" key="2">
    <source>
        <dbReference type="PROSITE-ProRule" id="PRU00498"/>
    </source>
</evidence>
<evidence type="ECO:0000269" key="3">
    <source>
    </source>
</evidence>
<evidence type="ECO:0000303" key="4">
    <source>
    </source>
</evidence>
<evidence type="ECO:0000305" key="5"/>
<evidence type="ECO:0000305" key="6">
    <source>
    </source>
</evidence>
<accession>P0DQP7</accession>
<reference key="1">
    <citation type="journal article" date="2000" name="Biochem. J.">
        <title>Two phospholipase A2 inhibitors from the plasma of Cerrophidion (Bothrops) godmani which selectively inhibit two different group-II phospholipase A2 myotoxins from its own venom: isolation, molecular cloning and biological properties.</title>
        <authorList>
            <person name="Lizano S."/>
            <person name="Angulo Y."/>
            <person name="Lomonte B."/>
            <person name="Fox J.W."/>
            <person name="Lambeau G."/>
            <person name="Lazdunski M."/>
            <person name="Gutierrez J.M."/>
        </authorList>
    </citation>
    <scope>NUCLEOTIDE SEQUENCE [MRNA]</scope>
    <scope>PROTEIN SEQUENCE OF 20-49</scope>
    <scope>FUNCTION</scope>
    <scope>SUBCELLULAR LOCATION</scope>
    <scope>GLYCOSYLATION</scope>
    <source>
        <tissue>Liver</tissue>
        <tissue>Plasma</tissue>
    </source>
</reference>